<accession>O88869</accession>
<protein>
    <recommendedName>
        <fullName>Ras association domain-containing protein 9</fullName>
    </recommendedName>
    <alternativeName>
        <fullName>PAM COOH-terminal interactor protein 1</fullName>
        <shortName>P-CIP1</shortName>
    </alternativeName>
    <alternativeName>
        <fullName>Peptidylglycine alpha-amidating monooxygenase COOH-terminal interactor</fullName>
    </alternativeName>
</protein>
<sequence length="435" mass="49545">MAPFGRNLLKTRHKNRSPTKDMDPEEKEIVVWVCQEEKIVCGLTKRTTSIDVIQALLEEHEATFGEKRFLLGKASDYCIVEKWRGSERALPPLTRILKLWKAWGDEQPNMQFVLVKTDAFLPVPLWRTAETKLVQNNEKPWELSPANYMKTLPPDKQKRIVRKTFRKLAKIRQDTGSHDRDNMECLVHLIISQDHTIHQQVQRMKELDMEIEKCEAKIHLDRIGNDGADYVQEAYLMPRSSEEEQKLDFQSEDNQTLEDLNDGEGVSQLEEQLQYYRALIDKLSAEIEREVKGAGTDGSEDMEGAAACELENSDLESVKCDLEKSMKAGLKIHSHLSGIQREIKYSDSLLQMKAREYELLAKEFSSLHISSKDGCQGKENRGKEAEASSSNGEIPPLTQRVFNTYTNDTDSDTGISSNHSQDSETTLGDVLLLAT</sequence>
<evidence type="ECO:0000255" key="1"/>
<evidence type="ECO:0000255" key="2">
    <source>
        <dbReference type="PROSITE-ProRule" id="PRU00166"/>
    </source>
</evidence>
<evidence type="ECO:0000256" key="3">
    <source>
        <dbReference type="SAM" id="MobiDB-lite"/>
    </source>
</evidence>
<evidence type="ECO:0000269" key="4">
    <source>
    </source>
</evidence>
<organism>
    <name type="scientific">Rattus norvegicus</name>
    <name type="common">Rat</name>
    <dbReference type="NCBI Taxonomy" id="10116"/>
    <lineage>
        <taxon>Eukaryota</taxon>
        <taxon>Metazoa</taxon>
        <taxon>Chordata</taxon>
        <taxon>Craniata</taxon>
        <taxon>Vertebrata</taxon>
        <taxon>Euteleostomi</taxon>
        <taxon>Mammalia</taxon>
        <taxon>Eutheria</taxon>
        <taxon>Euarchontoglires</taxon>
        <taxon>Glires</taxon>
        <taxon>Rodentia</taxon>
        <taxon>Myomorpha</taxon>
        <taxon>Muroidea</taxon>
        <taxon>Muridae</taxon>
        <taxon>Murinae</taxon>
        <taxon>Rattus</taxon>
    </lineage>
</organism>
<keyword id="KW-0175">Coiled coil</keyword>
<keyword id="KW-0967">Endosome</keyword>
<keyword id="KW-1185">Reference proteome</keyword>
<feature type="chain" id="PRO_0000299454" description="Ras association domain-containing protein 9">
    <location>
        <begin position="1"/>
        <end position="435"/>
    </location>
</feature>
<feature type="domain" description="Ras-associating" evidence="2">
    <location>
        <begin position="25"/>
        <end position="119"/>
    </location>
</feature>
<feature type="region of interest" description="Disordered" evidence="3">
    <location>
        <begin position="1"/>
        <end position="22"/>
    </location>
</feature>
<feature type="region of interest" description="Disordered" evidence="3">
    <location>
        <begin position="371"/>
        <end position="423"/>
    </location>
</feature>
<feature type="coiled-coil region" evidence="1">
    <location>
        <begin position="195"/>
        <end position="291"/>
    </location>
</feature>
<feature type="compositionally biased region" description="Basic and acidic residues" evidence="3">
    <location>
        <begin position="375"/>
        <end position="386"/>
    </location>
</feature>
<feature type="compositionally biased region" description="Polar residues" evidence="3">
    <location>
        <begin position="400"/>
        <end position="423"/>
    </location>
</feature>
<name>RASF9_RAT</name>
<dbReference type="EMBL" id="AF056208">
    <property type="protein sequence ID" value="AAD03249.1"/>
    <property type="molecule type" value="mRNA"/>
</dbReference>
<dbReference type="RefSeq" id="NP_075248.1">
    <property type="nucleotide sequence ID" value="NM_022959.2"/>
</dbReference>
<dbReference type="SMR" id="O88869"/>
<dbReference type="FunCoup" id="O88869">
    <property type="interactions" value="10"/>
</dbReference>
<dbReference type="IntAct" id="O88869">
    <property type="interactions" value="1"/>
</dbReference>
<dbReference type="STRING" id="10116.ENSRNOP00000055632"/>
<dbReference type="iPTMnet" id="O88869"/>
<dbReference type="PhosphoSitePlus" id="O88869"/>
<dbReference type="PaxDb" id="10116-ENSRNOP00000055632"/>
<dbReference type="GeneID" id="65053"/>
<dbReference type="KEGG" id="rno:65053"/>
<dbReference type="UCSC" id="RGD:621329">
    <property type="organism name" value="rat"/>
</dbReference>
<dbReference type="AGR" id="RGD:621329"/>
<dbReference type="CTD" id="9182"/>
<dbReference type="RGD" id="621329">
    <property type="gene designation" value="Rassf9"/>
</dbReference>
<dbReference type="eggNOG" id="KOG1574">
    <property type="taxonomic scope" value="Eukaryota"/>
</dbReference>
<dbReference type="InParanoid" id="O88869"/>
<dbReference type="OrthoDB" id="10034447at2759"/>
<dbReference type="PhylomeDB" id="O88869"/>
<dbReference type="PRO" id="PR:O88869"/>
<dbReference type="Proteomes" id="UP000002494">
    <property type="component" value="Unplaced"/>
</dbReference>
<dbReference type="GO" id="GO:0005829">
    <property type="term" value="C:cytosol"/>
    <property type="evidence" value="ECO:0000314"/>
    <property type="project" value="UniProtKB"/>
</dbReference>
<dbReference type="GO" id="GO:0005768">
    <property type="term" value="C:endosome"/>
    <property type="evidence" value="ECO:0000314"/>
    <property type="project" value="UniProtKB"/>
</dbReference>
<dbReference type="GO" id="GO:0055037">
    <property type="term" value="C:recycling endosome"/>
    <property type="evidence" value="ECO:0000314"/>
    <property type="project" value="RGD"/>
</dbReference>
<dbReference type="GO" id="GO:0012510">
    <property type="term" value="C:trans-Golgi network transport vesicle membrane"/>
    <property type="evidence" value="ECO:0000314"/>
    <property type="project" value="UniProtKB"/>
</dbReference>
<dbReference type="GO" id="GO:0019899">
    <property type="term" value="F:enzyme binding"/>
    <property type="evidence" value="ECO:0000353"/>
    <property type="project" value="RGD"/>
</dbReference>
<dbReference type="GO" id="GO:0019904">
    <property type="term" value="F:protein domain specific binding"/>
    <property type="evidence" value="ECO:0000353"/>
    <property type="project" value="RGD"/>
</dbReference>
<dbReference type="GO" id="GO:0016197">
    <property type="term" value="P:endosomal transport"/>
    <property type="evidence" value="ECO:0000303"/>
    <property type="project" value="UniProtKB"/>
</dbReference>
<dbReference type="GO" id="GO:0046907">
    <property type="term" value="P:intracellular transport"/>
    <property type="evidence" value="ECO:0000314"/>
    <property type="project" value="RGD"/>
</dbReference>
<dbReference type="GO" id="GO:0006605">
    <property type="term" value="P:protein targeting"/>
    <property type="evidence" value="ECO:0000303"/>
    <property type="project" value="UniProtKB"/>
</dbReference>
<dbReference type="GO" id="GO:0007165">
    <property type="term" value="P:signal transduction"/>
    <property type="evidence" value="ECO:0007669"/>
    <property type="project" value="InterPro"/>
</dbReference>
<dbReference type="CDD" id="cd16133">
    <property type="entry name" value="RA_RASSF9"/>
    <property type="match status" value="1"/>
</dbReference>
<dbReference type="FunFam" id="3.10.20.90:FF:000113">
    <property type="entry name" value="ras association domain-containing protein 9"/>
    <property type="match status" value="1"/>
</dbReference>
<dbReference type="Gene3D" id="3.10.20.90">
    <property type="entry name" value="Phosphatidylinositol 3-kinase Catalytic Subunit, Chain A, domain 1"/>
    <property type="match status" value="1"/>
</dbReference>
<dbReference type="InterPro" id="IPR033593">
    <property type="entry name" value="N-RASSF"/>
</dbReference>
<dbReference type="InterPro" id="IPR000159">
    <property type="entry name" value="RA_dom"/>
</dbReference>
<dbReference type="InterPro" id="IPR033633">
    <property type="entry name" value="RASSF9_RA"/>
</dbReference>
<dbReference type="InterPro" id="IPR029071">
    <property type="entry name" value="Ubiquitin-like_domsf"/>
</dbReference>
<dbReference type="PANTHER" id="PTHR15286:SF10">
    <property type="entry name" value="RAS ASSOCIATION DOMAIN-CONTAINING PROTEIN 9"/>
    <property type="match status" value="1"/>
</dbReference>
<dbReference type="PANTHER" id="PTHR15286">
    <property type="entry name" value="RAS-ASSOCIATING DOMAIN CONTAINING PROTEIN"/>
    <property type="match status" value="1"/>
</dbReference>
<dbReference type="SMART" id="SM00314">
    <property type="entry name" value="RA"/>
    <property type="match status" value="1"/>
</dbReference>
<dbReference type="SUPFAM" id="SSF54236">
    <property type="entry name" value="Ubiquitin-like"/>
    <property type="match status" value="1"/>
</dbReference>
<dbReference type="PROSITE" id="PS50200">
    <property type="entry name" value="RA"/>
    <property type="match status" value="1"/>
</dbReference>
<reference key="1">
    <citation type="journal article" date="1998" name="J. Biol. Chem.">
        <title>P-CIP1, a novel protein that interacts with the cytosolic domain of peptidylglycine alpha-amidating monooxygenase, is associated with endosomes.</title>
        <authorList>
            <person name="Chen L."/>
            <person name="Johnson R.C."/>
            <person name="Milgram S.L."/>
        </authorList>
    </citation>
    <scope>NUCLEOTIDE SEQUENCE [MRNA]</scope>
    <scope>FUNCTION</scope>
    <scope>INTERACTION WITH PAM</scope>
    <scope>SUBCELLULAR LOCATION</scope>
    <scope>TISSUE SPECIFICITY</scope>
    <source>
        <strain>Sprague-Dawley</strain>
    </source>
</reference>
<gene>
    <name type="primary">Rassf9</name>
    <name type="synonym">Pamci</name>
    <name type="synonym">Pcip1</name>
</gene>
<comment type="function">
    <text evidence="4">May play a role in regulating vesicuar trafficking in cells.</text>
</comment>
<comment type="subunit">
    <text evidence="4">Interacts with PAM.</text>
</comment>
<comment type="interaction">
    <interactant intactId="EBI-1395057">
        <id>O88869</id>
    </interactant>
    <interactant intactId="EBI-1395008">
        <id>P14925</id>
        <label>Pam</label>
    </interactant>
    <organismsDiffer>false</organismsDiffer>
    <experiments>3</experiments>
</comment>
<comment type="subcellular location">
    <subcellularLocation>
        <location evidence="4">Endosome</location>
    </subcellularLocation>
    <text>Accumulates on perinuclear endosomes.</text>
</comment>
<comment type="tissue specificity">
    <text evidence="4">Testis, kidney, skeletal muscle, liver, lung, brain, heart, pituitary gland, adrenal gland and ovary.</text>
</comment>
<proteinExistence type="evidence at protein level"/>